<accession>Q0SQE8</accession>
<evidence type="ECO:0000255" key="1">
    <source>
        <dbReference type="HAMAP-Rule" id="MF_00531"/>
    </source>
</evidence>
<evidence type="ECO:0000305" key="2"/>
<gene>
    <name evidence="1" type="primary">rpsS</name>
    <name type="ordered locus">CPR_2395</name>
</gene>
<name>RS19_CLOPS</name>
<proteinExistence type="inferred from homology"/>
<organism>
    <name type="scientific">Clostridium perfringens (strain SM101 / Type A)</name>
    <dbReference type="NCBI Taxonomy" id="289380"/>
    <lineage>
        <taxon>Bacteria</taxon>
        <taxon>Bacillati</taxon>
        <taxon>Bacillota</taxon>
        <taxon>Clostridia</taxon>
        <taxon>Eubacteriales</taxon>
        <taxon>Clostridiaceae</taxon>
        <taxon>Clostridium</taxon>
    </lineage>
</organism>
<reference key="1">
    <citation type="journal article" date="2006" name="Genome Res.">
        <title>Skewed genomic variability in strains of the toxigenic bacterial pathogen, Clostridium perfringens.</title>
        <authorList>
            <person name="Myers G.S.A."/>
            <person name="Rasko D.A."/>
            <person name="Cheung J.K."/>
            <person name="Ravel J."/>
            <person name="Seshadri R."/>
            <person name="DeBoy R.T."/>
            <person name="Ren Q."/>
            <person name="Varga J."/>
            <person name="Awad M.M."/>
            <person name="Brinkac L.M."/>
            <person name="Daugherty S.C."/>
            <person name="Haft D.H."/>
            <person name="Dodson R.J."/>
            <person name="Madupu R."/>
            <person name="Nelson W.C."/>
            <person name="Rosovitz M.J."/>
            <person name="Sullivan S.A."/>
            <person name="Khouri H."/>
            <person name="Dimitrov G.I."/>
            <person name="Watkins K.L."/>
            <person name="Mulligan S."/>
            <person name="Benton J."/>
            <person name="Radune D."/>
            <person name="Fisher D.J."/>
            <person name="Atkins H.S."/>
            <person name="Hiscox T."/>
            <person name="Jost B.H."/>
            <person name="Billington S.J."/>
            <person name="Songer J.G."/>
            <person name="McClane B.A."/>
            <person name="Titball R.W."/>
            <person name="Rood J.I."/>
            <person name="Melville S.B."/>
            <person name="Paulsen I.T."/>
        </authorList>
    </citation>
    <scope>NUCLEOTIDE SEQUENCE [LARGE SCALE GENOMIC DNA]</scope>
    <source>
        <strain>SM101 / Type A</strain>
    </source>
</reference>
<comment type="function">
    <text evidence="1">Protein S19 forms a complex with S13 that binds strongly to the 16S ribosomal RNA.</text>
</comment>
<comment type="similarity">
    <text evidence="1">Belongs to the universal ribosomal protein uS19 family.</text>
</comment>
<feature type="chain" id="PRO_0000265349" description="Small ribosomal subunit protein uS19">
    <location>
        <begin position="1"/>
        <end position="93"/>
    </location>
</feature>
<protein>
    <recommendedName>
        <fullName evidence="1">Small ribosomal subunit protein uS19</fullName>
    </recommendedName>
    <alternativeName>
        <fullName evidence="2">30S ribosomal protein S19</fullName>
    </alternativeName>
</protein>
<dbReference type="EMBL" id="CP000312">
    <property type="protein sequence ID" value="ABG87752.1"/>
    <property type="molecule type" value="Genomic_DNA"/>
</dbReference>
<dbReference type="RefSeq" id="WP_003454422.1">
    <property type="nucleotide sequence ID" value="NZ_CAXVKH010000004.1"/>
</dbReference>
<dbReference type="SMR" id="Q0SQE8"/>
<dbReference type="GeneID" id="93001013"/>
<dbReference type="KEGG" id="cpr:CPR_2395"/>
<dbReference type="Proteomes" id="UP000001824">
    <property type="component" value="Chromosome"/>
</dbReference>
<dbReference type="GO" id="GO:0005737">
    <property type="term" value="C:cytoplasm"/>
    <property type="evidence" value="ECO:0007669"/>
    <property type="project" value="UniProtKB-ARBA"/>
</dbReference>
<dbReference type="GO" id="GO:0015935">
    <property type="term" value="C:small ribosomal subunit"/>
    <property type="evidence" value="ECO:0007669"/>
    <property type="project" value="InterPro"/>
</dbReference>
<dbReference type="GO" id="GO:0019843">
    <property type="term" value="F:rRNA binding"/>
    <property type="evidence" value="ECO:0007669"/>
    <property type="project" value="UniProtKB-UniRule"/>
</dbReference>
<dbReference type="GO" id="GO:0003735">
    <property type="term" value="F:structural constituent of ribosome"/>
    <property type="evidence" value="ECO:0007669"/>
    <property type="project" value="InterPro"/>
</dbReference>
<dbReference type="GO" id="GO:0000028">
    <property type="term" value="P:ribosomal small subunit assembly"/>
    <property type="evidence" value="ECO:0007669"/>
    <property type="project" value="TreeGrafter"/>
</dbReference>
<dbReference type="GO" id="GO:0006412">
    <property type="term" value="P:translation"/>
    <property type="evidence" value="ECO:0007669"/>
    <property type="project" value="UniProtKB-UniRule"/>
</dbReference>
<dbReference type="FunFam" id="3.30.860.10:FF:000001">
    <property type="entry name" value="30S ribosomal protein S19"/>
    <property type="match status" value="1"/>
</dbReference>
<dbReference type="Gene3D" id="3.30.860.10">
    <property type="entry name" value="30s Ribosomal Protein S19, Chain A"/>
    <property type="match status" value="1"/>
</dbReference>
<dbReference type="HAMAP" id="MF_00531">
    <property type="entry name" value="Ribosomal_uS19"/>
    <property type="match status" value="1"/>
</dbReference>
<dbReference type="InterPro" id="IPR002222">
    <property type="entry name" value="Ribosomal_uS19"/>
</dbReference>
<dbReference type="InterPro" id="IPR005732">
    <property type="entry name" value="Ribosomal_uS19_bac-type"/>
</dbReference>
<dbReference type="InterPro" id="IPR020934">
    <property type="entry name" value="Ribosomal_uS19_CS"/>
</dbReference>
<dbReference type="InterPro" id="IPR023575">
    <property type="entry name" value="Ribosomal_uS19_SF"/>
</dbReference>
<dbReference type="NCBIfam" id="TIGR01050">
    <property type="entry name" value="rpsS_bact"/>
    <property type="match status" value="1"/>
</dbReference>
<dbReference type="PANTHER" id="PTHR11880">
    <property type="entry name" value="RIBOSOMAL PROTEIN S19P FAMILY MEMBER"/>
    <property type="match status" value="1"/>
</dbReference>
<dbReference type="PANTHER" id="PTHR11880:SF8">
    <property type="entry name" value="SMALL RIBOSOMAL SUBUNIT PROTEIN US19M"/>
    <property type="match status" value="1"/>
</dbReference>
<dbReference type="Pfam" id="PF00203">
    <property type="entry name" value="Ribosomal_S19"/>
    <property type="match status" value="1"/>
</dbReference>
<dbReference type="PIRSF" id="PIRSF002144">
    <property type="entry name" value="Ribosomal_S19"/>
    <property type="match status" value="1"/>
</dbReference>
<dbReference type="PRINTS" id="PR00975">
    <property type="entry name" value="RIBOSOMALS19"/>
</dbReference>
<dbReference type="SUPFAM" id="SSF54570">
    <property type="entry name" value="Ribosomal protein S19"/>
    <property type="match status" value="1"/>
</dbReference>
<dbReference type="PROSITE" id="PS00323">
    <property type="entry name" value="RIBOSOMAL_S19"/>
    <property type="match status" value="1"/>
</dbReference>
<sequence length="93" mass="10640">MSRSIKKGPFVHAGLLKKIEEMNQNGDKKVIKTWSRSSTIFPQMIGHTIAVHDGRKHIPVYVTEDMVGHKLGEFVLTRTFKGHIKNEKTSKRK</sequence>
<keyword id="KW-0687">Ribonucleoprotein</keyword>
<keyword id="KW-0689">Ribosomal protein</keyword>
<keyword id="KW-0694">RNA-binding</keyword>
<keyword id="KW-0699">rRNA-binding</keyword>